<evidence type="ECO:0000250" key="1">
    <source>
        <dbReference type="UniProtKB" id="A0A009IHW8"/>
    </source>
</evidence>
<evidence type="ECO:0000256" key="2">
    <source>
        <dbReference type="SAM" id="MobiDB-lite"/>
    </source>
</evidence>
<evidence type="ECO:0000269" key="3">
    <source>
    </source>
</evidence>
<evidence type="ECO:0000269" key="4">
    <source>
    </source>
</evidence>
<evidence type="ECO:0000269" key="5">
    <source>
    </source>
</evidence>
<evidence type="ECO:0000303" key="6">
    <source>
    </source>
</evidence>
<evidence type="ECO:0000305" key="7"/>
<evidence type="ECO:0000305" key="8">
    <source>
    </source>
</evidence>
<evidence type="ECO:0000305" key="9">
    <source>
    </source>
</evidence>
<evidence type="ECO:0000312" key="10">
    <source>
        <dbReference type="EMBL" id="AAO54553.1"/>
    </source>
</evidence>
<evidence type="ECO:0000312" key="11">
    <source>
        <dbReference type="EMBL" id="AAO59032.1"/>
    </source>
</evidence>
<accession>Q877R9</accession>
<accession>Q79LW4</accession>
<organism>
    <name type="scientific">Pseudomonas syringae pv. tomato (strain ATCC BAA-871 / DC3000)</name>
    <dbReference type="NCBI Taxonomy" id="223283"/>
    <lineage>
        <taxon>Bacteria</taxon>
        <taxon>Pseudomonadati</taxon>
        <taxon>Pseudomonadota</taxon>
        <taxon>Gammaproteobacteria</taxon>
        <taxon>Pseudomonadales</taxon>
        <taxon>Pseudomonadaceae</taxon>
        <taxon>Pseudomonas</taxon>
    </lineage>
</organism>
<proteinExistence type="evidence at protein level"/>
<name>HOPAM_PSESM</name>
<keyword id="KW-1035">Host cytoplasm</keyword>
<keyword id="KW-0378">Hydrolase</keyword>
<keyword id="KW-0520">NAD</keyword>
<keyword id="KW-0614">Plasmid</keyword>
<keyword id="KW-1185">Reference proteome</keyword>
<keyword id="KW-0843">Virulence</keyword>
<geneLocation type="plasmid" evidence="11">
    <name>pDC3000A</name>
</geneLocation>
<protein>
    <recommendedName>
        <fullName evidence="7">3' cyclic ADP-D-ribose synthase HopAM1</fullName>
        <shortName evidence="7">3'cADPR synthase HopAM1</shortName>
        <ecNumber evidence="5">3.2.2.-</ecNumber>
    </recommendedName>
    <alternativeName>
        <fullName evidence="6">NAD(+) hydrolase HopAM1</fullName>
        <shortName evidence="6">HopAM1</shortName>
    </alternativeName>
</protein>
<sequence>MHANPLSSFNRAQHGNLTNVEASQVKSAGTSSTTNIDSKNIEEHVADRLSDLGRPDGGWFFEKSLGTLKNLNLEQLAGIHDVLKLTDGVKNIVSFGAREGGFELAMQFRHDLYRSQHPDENSPHDAATHYLDAISLQSNKFTKLEKLQHVDVFKMQNPFWDVGYKNGIAHAKKMAFFITPEWLGSDFCKQEFQWLSETKNKDIKSAFVIFKDVDLKSKNMTSIFNFADFHKSRVMMASTPPESGLNNVKIENSVDLNFKRLLTDRESWELNNFLGD</sequence>
<gene>
    <name evidence="10" type="primary">hopAM1-1</name>
    <name evidence="11" type="synonym">hopAM1-2</name>
    <name evidence="10" type="ordered locus">PSPTO_1022</name>
    <name evidence="11" type="ordered locus">PSPTO_A0005</name>
</gene>
<dbReference type="EC" id="3.2.2.-" evidence="5"/>
<dbReference type="EMBL" id="AE016853">
    <property type="protein sequence ID" value="AAO54553.1"/>
    <property type="molecule type" value="Genomic_DNA"/>
</dbReference>
<dbReference type="EMBL" id="AE016855">
    <property type="protein sequence ID" value="AAO59032.1"/>
    <property type="molecule type" value="Genomic_DNA"/>
</dbReference>
<dbReference type="RefSeq" id="NP_790858.1">
    <property type="nucleotide sequence ID" value="NC_004578.1"/>
</dbReference>
<dbReference type="RefSeq" id="NP_808666.1">
    <property type="nucleotide sequence ID" value="NC_004633.1"/>
</dbReference>
<dbReference type="RefSeq" id="WP_005770909.1">
    <property type="nucleotide sequence ID" value="NC_004633.1"/>
</dbReference>
<dbReference type="GeneID" id="1187312"/>
<dbReference type="KEGG" id="pst:PSPTO_1022"/>
<dbReference type="KEGG" id="pst:PSPTO_A0005"/>
<dbReference type="HOGENOM" id="CLU_1049514_0_0_6"/>
<dbReference type="OrthoDB" id="6922282at2"/>
<dbReference type="Proteomes" id="UP000002515">
    <property type="component" value="Chromosome"/>
</dbReference>
<dbReference type="Proteomes" id="UP000002515">
    <property type="component" value="Plasmid pDC3000A"/>
</dbReference>
<dbReference type="GO" id="GO:0044164">
    <property type="term" value="C:host cell cytosol"/>
    <property type="evidence" value="ECO:0007669"/>
    <property type="project" value="UniProtKB-SubCell"/>
</dbReference>
<dbReference type="GO" id="GO:0016787">
    <property type="term" value="F:hydrolase activity"/>
    <property type="evidence" value="ECO:0007669"/>
    <property type="project" value="UniProtKB-KW"/>
</dbReference>
<dbReference type="Gene3D" id="3.40.50.10140">
    <property type="entry name" value="Toll/interleukin-1 receptor homology (TIR) domain"/>
    <property type="match status" value="1"/>
</dbReference>
<dbReference type="InterPro" id="IPR035897">
    <property type="entry name" value="Toll_tir_struct_dom_sf"/>
</dbReference>
<feature type="chain" id="PRO_0000457982" description="3' cyclic ADP-D-ribose synthase HopAM1">
    <location>
        <begin position="1"/>
        <end position="276"/>
    </location>
</feature>
<feature type="region of interest" description="Disordered" evidence="2">
    <location>
        <begin position="20"/>
        <end position="39"/>
    </location>
</feature>
<feature type="region of interest" description="TIR domain" evidence="8">
    <location>
        <begin position="165"/>
        <end position="214"/>
    </location>
</feature>
<feature type="compositionally biased region" description="Polar residues" evidence="2">
    <location>
        <begin position="20"/>
        <end position="38"/>
    </location>
</feature>
<feature type="active site" evidence="1">
    <location>
        <position position="190"/>
    </location>
</feature>
<feature type="site" description="Important for ADPR cyclization" evidence="9">
    <location>
        <position position="187"/>
    </location>
</feature>
<feature type="mutagenesis site" description="No hypersensitive response in A.thaliana plants, no longer toxic in N.tabacum, N.benthamiana or yeast, no change in plant subcellular location." evidence="4">
    <original>F</original>
    <variation>A</variation>
    <location>
        <position position="177"/>
    </location>
</feature>
<feature type="mutagenesis site" description="No NAD(+) hydrolase activity, no hypersensitive response in A.thaliana plants, no longer toxic in N.tabacum, N.benthamiana or yeast, no change in plant subcellular location." evidence="4">
    <original>E</original>
    <variation>A</variation>
    <location>
        <position position="191"/>
    </location>
</feature>
<feature type="mutagenesis site" description="No longer toxic in N.tabacum, N.benthamiana or yeast, no change in plant subcellular location." evidence="4">
    <original>F</original>
    <variation>A</variation>
    <location>
        <position position="207"/>
    </location>
</feature>
<feature type="mutagenesis site" description="No longer toxic in N.tabacum, N.benthamiana or yeast, no change in plant subcellular location." evidence="4">
    <original>F</original>
    <variation>A</variation>
    <location>
        <position position="210"/>
    </location>
</feature>
<comment type="function">
    <text evidence="4 5">NAD(+) hydrolase (NADase) that cleaves NAD(+) into nicotinamide and 3' cyclic ADP-D-ribose (3'cADPR, v2-cADPR) (PubMed:34657283, PubMed:36048923). Upon infiltration of A.thaliana with this bacteria an effector-triggered immunity-like phenotype (ETI-like, cell death with severe chlorosis) is seen, 3'cADPR levels rise while NAD(+) levels remain constant. Plant immune responses are suppressed. Triggers hypersensitive response-like cell death in Nicotiana tabacum cv. Xanthi and N.benthamiana when transiently expressed, depletes NAD(+) in N.benthamiana. Causes cell death upon induction in yeast due to NAD(+) depletion and/or 3'cADPR itself (PubMed:34657283). Transgenic A.thaliana expressing HopAM1 suppresses its plant immune system upon challenge; the plants produce 3'cADPR without significantly depleting NAD(+) (PubMed:36048923).</text>
</comment>
<comment type="catalytic activity">
    <reaction evidence="4 5">
        <text>NAD(+) = 3'cADPR + nicotinamide + H(+)</text>
        <dbReference type="Rhea" id="RHEA:75303"/>
        <dbReference type="ChEBI" id="CHEBI:15378"/>
        <dbReference type="ChEBI" id="CHEBI:17154"/>
        <dbReference type="ChEBI" id="CHEBI:57540"/>
        <dbReference type="ChEBI" id="CHEBI:194249"/>
    </reaction>
    <physiologicalReaction direction="left-to-right" evidence="4 5">
        <dbReference type="Rhea" id="RHEA:75304"/>
    </physiologicalReaction>
</comment>
<comment type="biophysicochemical properties">
    <kinetics>
        <KM evidence="4">174.8 uM for NAD(+)</KM>
        <text evidence="4">kcat is 0.56 min(-1).</text>
    </kinetics>
</comment>
<comment type="subunit">
    <text evidence="1">Homodimer.</text>
</comment>
<comment type="subcellular location">
    <subcellularLocation>
        <location evidence="4">Host cytoplasm</location>
    </subcellularLocation>
    <subcellularLocation>
        <location evidence="8">Host cytoplasm</location>
        <location evidence="8">Host cytosol</location>
    </subcellularLocation>
    <text evidence="4">Delivered into plants by a type III secretion system (T3SS).</text>
</comment>
<comment type="disruption phenotype">
    <text evidence="4 5">When both genes are deleted no 3'cADPR is detected in infiltrated A.thaliana, bacteria grow a bit less well in planta, when the genes are deleted individually reduced amounts of 3'cADPR are seen (PubMed:34657283). When both genes are deleted pattern-triggered immunity is slower in infiltrated A.thaliana (PubMed:36048923).</text>
</comment>
<comment type="miscellaneous">
    <text evidence="3">Identical genes are encoded on the chromosome (hopAM1-1, AAO54553.1) and on plasmid pDC3000A (hopAM1-2, AAO59032.1).</text>
</comment>
<reference evidence="10 11" key="1">
    <citation type="journal article" date="2003" name="Proc. Natl. Acad. Sci. U.S.A.">
        <title>The complete genome sequence of the Arabidopsis and tomato pathogen Pseudomonas syringae pv. tomato DC3000.</title>
        <authorList>
            <person name="Buell C.R."/>
            <person name="Joardar V."/>
            <person name="Lindeberg M."/>
            <person name="Selengut J."/>
            <person name="Paulsen I.T."/>
            <person name="Gwinn M.L."/>
            <person name="Dodson R.J."/>
            <person name="DeBoy R.T."/>
            <person name="Durkin A.S."/>
            <person name="Kolonay J.F."/>
            <person name="Madupu R."/>
            <person name="Daugherty S.C."/>
            <person name="Brinkac L.M."/>
            <person name="Beanan M.J."/>
            <person name="Haft D.H."/>
            <person name="Nelson W.C."/>
            <person name="Davidsen T.M."/>
            <person name="Zafar N."/>
            <person name="Zhou L."/>
            <person name="Liu J."/>
            <person name="Yuan Q."/>
            <person name="Khouri H.M."/>
            <person name="Fedorova N.B."/>
            <person name="Tran B."/>
            <person name="Russell D."/>
            <person name="Berry K.J."/>
            <person name="Utterback T.R."/>
            <person name="Van Aken S.E."/>
            <person name="Feldblyum T.V."/>
            <person name="D'Ascenzo M."/>
            <person name="Deng W.-L."/>
            <person name="Ramos A.R."/>
            <person name="Alfano J.R."/>
            <person name="Cartinhour S."/>
            <person name="Chatterjee A.K."/>
            <person name="Delaney T.P."/>
            <person name="Lazarowitz S.G."/>
            <person name="Martin G.B."/>
            <person name="Schneider D.J."/>
            <person name="Tang X."/>
            <person name="Bender C.L."/>
            <person name="White O."/>
            <person name="Fraser C.M."/>
            <person name="Collmer A."/>
        </authorList>
    </citation>
    <scope>NUCLEOTIDE SEQUENCE [LARGE SCALE GENOMIC DNA]</scope>
    <source>
        <strain>ATCC BAA-871 / DC3000</strain>
        <plasmid evidence="11">pDC3000A</plasmid>
    </source>
</reference>
<reference key="2">
    <citation type="journal article" date="2022" name="New Phytol.">
        <title>A phytobacterial TIR domain effector manipulates NAD+ to promote virulence.</title>
        <authorList>
            <person name="Eastman S."/>
            <person name="Smith T."/>
            <person name="Zaydman M.A."/>
            <person name="Kim P."/>
            <person name="Martinez S."/>
            <person name="Damaraju N."/>
            <person name="DiAntonio A."/>
            <person name="Milbrandt J."/>
            <person name="Clemente T.E."/>
            <person name="Alfano J.R."/>
            <person name="Guo M."/>
        </authorList>
    </citation>
    <scope>FUNCTION</scope>
    <scope>CATALYTIC ACTIVITY</scope>
    <scope>BIOPHYSICOCHEMICAL PROPERTIES</scope>
    <scope>SUBCELLULAR LOCATION</scope>
    <scope>DISRUPTION PHENOTYPE</scope>
    <scope>MUTAGENESIS OF PHE-177; GLU-191; PHE-207 AND PHE-210</scope>
    <source>
        <strain>ATCC BAA-871 / DC3000</strain>
    </source>
</reference>
<reference key="3">
    <citation type="journal article" date="2022" name="Science">
        <title>Cyclic ADP ribose isomers: Production, chemical structures, and immune signaling.</title>
        <authorList>
            <person name="Manik M.K."/>
            <person name="Shi Y."/>
            <person name="Li S."/>
            <person name="Zaydman M.A."/>
            <person name="Damaraju N."/>
            <person name="Eastman S."/>
            <person name="Smith T.G."/>
            <person name="Gu W."/>
            <person name="Masic V."/>
            <person name="Mosaiab T."/>
            <person name="Weagley J.S."/>
            <person name="Hancock S.J."/>
            <person name="Vasquez E."/>
            <person name="Hartley-Tassell L."/>
            <person name="Kargios N."/>
            <person name="Maruta N."/>
            <person name="Lim B.Y.J."/>
            <person name="Burdett H."/>
            <person name="Landsberg M.J."/>
            <person name="Schembri M.A."/>
            <person name="Prokes I."/>
            <person name="Song L."/>
            <person name="Grant M."/>
            <person name="DiAntonio A."/>
            <person name="Nanson J.D."/>
            <person name="Guo M."/>
            <person name="Milbrandt J."/>
            <person name="Ve T."/>
            <person name="Kobe B."/>
        </authorList>
    </citation>
    <scope>FUNCTION</scope>
    <scope>CATALYTIC ACTIVITY</scope>
    <scope>DISRUPTION PHENOTYPE</scope>
    <scope>MUTAGENESIS OF GLU-191</scope>
    <source>
        <strain>ATCC BAA-871 / DC3000</strain>
    </source>
</reference>